<keyword id="KW-0093">Biotin biosynthesis</keyword>
<keyword id="KW-0963">Cytoplasm</keyword>
<keyword id="KW-0378">Hydrolase</keyword>
<keyword id="KW-1185">Reference proteome</keyword>
<keyword id="KW-0719">Serine esterase</keyword>
<sequence length="256" mass="28543">MNNIWWQTKGQGNVHLVLLHGWGLNAEVWRCIDEELSSHFTLHLVDLPGFGRSRGFGALSLADMAEAVLQQAPDKAIWLGWSLGGLVASQIALTHPERVQALVTVASSPCFSARDEWPGIKPDVLAGFQQQLSDDFQRTVERFLALQTMGTETARQDARALKKTVLALPMPEVDVLNGGLEILKTVDLRQPLQNVPMPFLRLYGYLDGLVPRKVVPMLDKLWPHSESYIFAKAAHAPFISHPVEFCHLLVALKQRV</sequence>
<feature type="chain" id="PRO_1000067264" description="Pimeloyl-[acyl-carrier protein] methyl ester esterase">
    <location>
        <begin position="1"/>
        <end position="256"/>
    </location>
</feature>
<feature type="domain" description="AB hydrolase-1" evidence="1">
    <location>
        <begin position="15"/>
        <end position="242"/>
    </location>
</feature>
<feature type="active site" description="Nucleophile" evidence="2">
    <location>
        <position position="82"/>
    </location>
</feature>
<feature type="active site" evidence="2">
    <location>
        <position position="207"/>
    </location>
</feature>
<feature type="active site" evidence="2">
    <location>
        <position position="235"/>
    </location>
</feature>
<feature type="binding site" evidence="2">
    <location>
        <position position="22"/>
    </location>
    <ligand>
        <name>substrate</name>
    </ligand>
</feature>
<feature type="binding site" evidence="2">
    <location>
        <begin position="82"/>
        <end position="83"/>
    </location>
    <ligand>
        <name>substrate</name>
    </ligand>
</feature>
<feature type="binding site" evidence="2">
    <location>
        <begin position="143"/>
        <end position="147"/>
    </location>
    <ligand>
        <name>substrate</name>
    </ligand>
</feature>
<feature type="binding site" evidence="2">
    <location>
        <position position="235"/>
    </location>
    <ligand>
        <name>substrate</name>
    </ligand>
</feature>
<gene>
    <name evidence="2" type="primary">bioH</name>
    <name type="ordered locus">EcE24377A_3887</name>
</gene>
<protein>
    <recommendedName>
        <fullName evidence="2">Pimeloyl-[acyl-carrier protein] methyl ester esterase</fullName>
        <ecNumber evidence="2">3.1.1.85</ecNumber>
    </recommendedName>
    <alternativeName>
        <fullName evidence="2">Biotin synthesis protein BioH</fullName>
    </alternativeName>
    <alternativeName>
        <fullName evidence="2">Carboxylesterase BioH</fullName>
    </alternativeName>
</protein>
<comment type="function">
    <text evidence="2">The physiological role of BioH is to remove the methyl group introduced by BioC when the pimeloyl moiety is complete. It allows to synthesize pimeloyl-ACP via the fatty acid synthetic pathway through the hydrolysis of the ester bonds of pimeloyl-ACP esters.</text>
</comment>
<comment type="catalytic activity">
    <reaction evidence="2">
        <text>6-carboxyhexanoyl-[ACP] methyl ester + H2O = 6-carboxyhexanoyl-[ACP] + methanol + H(+)</text>
        <dbReference type="Rhea" id="RHEA:42700"/>
        <dbReference type="Rhea" id="RHEA-COMP:9955"/>
        <dbReference type="Rhea" id="RHEA-COMP:10186"/>
        <dbReference type="ChEBI" id="CHEBI:15377"/>
        <dbReference type="ChEBI" id="CHEBI:15378"/>
        <dbReference type="ChEBI" id="CHEBI:17790"/>
        <dbReference type="ChEBI" id="CHEBI:78846"/>
        <dbReference type="ChEBI" id="CHEBI:82735"/>
        <dbReference type="EC" id="3.1.1.85"/>
    </reaction>
</comment>
<comment type="pathway">
    <text evidence="2">Cofactor biosynthesis; biotin biosynthesis.</text>
</comment>
<comment type="subunit">
    <text evidence="2">Monomer.</text>
</comment>
<comment type="subcellular location">
    <subcellularLocation>
        <location evidence="2">Cytoplasm</location>
    </subcellularLocation>
</comment>
<comment type="similarity">
    <text evidence="2">Belongs to the AB hydrolase superfamily. Carboxylesterase BioH family.</text>
</comment>
<proteinExistence type="inferred from homology"/>
<reference key="1">
    <citation type="journal article" date="2008" name="J. Bacteriol.">
        <title>The pangenome structure of Escherichia coli: comparative genomic analysis of E. coli commensal and pathogenic isolates.</title>
        <authorList>
            <person name="Rasko D.A."/>
            <person name="Rosovitz M.J."/>
            <person name="Myers G.S.A."/>
            <person name="Mongodin E.F."/>
            <person name="Fricke W.F."/>
            <person name="Gajer P."/>
            <person name="Crabtree J."/>
            <person name="Sebaihia M."/>
            <person name="Thomson N.R."/>
            <person name="Chaudhuri R."/>
            <person name="Henderson I.R."/>
            <person name="Sperandio V."/>
            <person name="Ravel J."/>
        </authorList>
    </citation>
    <scope>NUCLEOTIDE SEQUENCE [LARGE SCALE GENOMIC DNA]</scope>
    <source>
        <strain>E24377A / ETEC</strain>
    </source>
</reference>
<organism>
    <name type="scientific">Escherichia coli O139:H28 (strain E24377A / ETEC)</name>
    <dbReference type="NCBI Taxonomy" id="331111"/>
    <lineage>
        <taxon>Bacteria</taxon>
        <taxon>Pseudomonadati</taxon>
        <taxon>Pseudomonadota</taxon>
        <taxon>Gammaproteobacteria</taxon>
        <taxon>Enterobacterales</taxon>
        <taxon>Enterobacteriaceae</taxon>
        <taxon>Escherichia</taxon>
    </lineage>
</organism>
<evidence type="ECO:0000255" key="1"/>
<evidence type="ECO:0000255" key="2">
    <source>
        <dbReference type="HAMAP-Rule" id="MF_01260"/>
    </source>
</evidence>
<dbReference type="EC" id="3.1.1.85" evidence="2"/>
<dbReference type="EMBL" id="CP000800">
    <property type="protein sequence ID" value="ABV21190.1"/>
    <property type="molecule type" value="Genomic_DNA"/>
</dbReference>
<dbReference type="RefSeq" id="WP_001060069.1">
    <property type="nucleotide sequence ID" value="NC_009801.1"/>
</dbReference>
<dbReference type="SMR" id="A7ZSU1"/>
<dbReference type="ESTHER" id="ecoli-bioh">
    <property type="family name" value="BioH"/>
</dbReference>
<dbReference type="MEROPS" id="S33.994"/>
<dbReference type="KEGG" id="ecw:EcE24377A_3887"/>
<dbReference type="HOGENOM" id="CLU_020336_12_2_6"/>
<dbReference type="UniPathway" id="UPA00078"/>
<dbReference type="Proteomes" id="UP000001122">
    <property type="component" value="Chromosome"/>
</dbReference>
<dbReference type="GO" id="GO:0005737">
    <property type="term" value="C:cytoplasm"/>
    <property type="evidence" value="ECO:0007669"/>
    <property type="project" value="UniProtKB-SubCell"/>
</dbReference>
<dbReference type="GO" id="GO:0090499">
    <property type="term" value="F:pimelyl-[acyl-carrier protein] methyl ester esterase activity"/>
    <property type="evidence" value="ECO:0007669"/>
    <property type="project" value="UniProtKB-EC"/>
</dbReference>
<dbReference type="GO" id="GO:0009102">
    <property type="term" value="P:biotin biosynthetic process"/>
    <property type="evidence" value="ECO:0007669"/>
    <property type="project" value="UniProtKB-UniRule"/>
</dbReference>
<dbReference type="FunFam" id="3.40.50.1820:FF:000045">
    <property type="entry name" value="Pimeloyl-[acyl-carrier protein] methyl ester esterase"/>
    <property type="match status" value="1"/>
</dbReference>
<dbReference type="Gene3D" id="3.40.50.1820">
    <property type="entry name" value="alpha/beta hydrolase"/>
    <property type="match status" value="1"/>
</dbReference>
<dbReference type="HAMAP" id="MF_01260">
    <property type="entry name" value="Carboxylester"/>
    <property type="match status" value="1"/>
</dbReference>
<dbReference type="InterPro" id="IPR000073">
    <property type="entry name" value="AB_hydrolase_1"/>
</dbReference>
<dbReference type="InterPro" id="IPR029058">
    <property type="entry name" value="AB_hydrolase_fold"/>
</dbReference>
<dbReference type="InterPro" id="IPR010076">
    <property type="entry name" value="BioH"/>
</dbReference>
<dbReference type="InterPro" id="IPR050228">
    <property type="entry name" value="Carboxylesterase_BioH"/>
</dbReference>
<dbReference type="NCBIfam" id="TIGR01738">
    <property type="entry name" value="bioH"/>
    <property type="match status" value="1"/>
</dbReference>
<dbReference type="NCBIfam" id="NF007674">
    <property type="entry name" value="PRK10349.1"/>
    <property type="match status" value="1"/>
</dbReference>
<dbReference type="PANTHER" id="PTHR43194">
    <property type="entry name" value="HYDROLASE ALPHA/BETA FOLD FAMILY"/>
    <property type="match status" value="1"/>
</dbReference>
<dbReference type="PANTHER" id="PTHR43194:SF5">
    <property type="entry name" value="PIMELOYL-[ACYL-CARRIER PROTEIN] METHYL ESTER ESTERASE"/>
    <property type="match status" value="1"/>
</dbReference>
<dbReference type="Pfam" id="PF00561">
    <property type="entry name" value="Abhydrolase_1"/>
    <property type="match status" value="1"/>
</dbReference>
<dbReference type="SUPFAM" id="SSF53474">
    <property type="entry name" value="alpha/beta-Hydrolases"/>
    <property type="match status" value="1"/>
</dbReference>
<accession>A7ZSU1</accession>
<name>BIOH_ECO24</name>